<evidence type="ECO:0000255" key="1">
    <source>
        <dbReference type="HAMAP-Rule" id="MF_01393"/>
    </source>
</evidence>
<sequence length="250" mass="26920">MSNDPTHQFLVNKIVPLEIGGIDFSFTNASLFMVATVGAAAGFLYLTTSQRGLIPTRMQSVSEMSYEFIASMLREGAGSHGMKFFPMVFSLFMFILTANLLGMVPYFFTVTSQIIVTFALAVFVIGTVLLYGFYKHGFGFLKLFVPQGVPGALLPLVVAIEIISFLSRPISLSVRLFANMLAGHITLKVFAGFVASLSAFGALGIGGAILPLIMTVALTGLEFLVAFLQAYVFAVLTCMYLNDAVHPGGH</sequence>
<accession>Q92RM8</accession>
<reference key="1">
    <citation type="journal article" date="2001" name="Proc. Natl. Acad. Sci. U.S.A.">
        <title>Analysis of the chromosome sequence of the legume symbiont Sinorhizobium meliloti strain 1021.</title>
        <authorList>
            <person name="Capela D."/>
            <person name="Barloy-Hubler F."/>
            <person name="Gouzy J."/>
            <person name="Bothe G."/>
            <person name="Ampe F."/>
            <person name="Batut J."/>
            <person name="Boistard P."/>
            <person name="Becker A."/>
            <person name="Boutry M."/>
            <person name="Cadieu E."/>
            <person name="Dreano S."/>
            <person name="Gloux S."/>
            <person name="Godrie T."/>
            <person name="Goffeau A."/>
            <person name="Kahn D."/>
            <person name="Kiss E."/>
            <person name="Lelaure V."/>
            <person name="Masuy D."/>
            <person name="Pohl T."/>
            <person name="Portetelle D."/>
            <person name="Puehler A."/>
            <person name="Purnelle B."/>
            <person name="Ramsperger U."/>
            <person name="Renard C."/>
            <person name="Thebault P."/>
            <person name="Vandenbol M."/>
            <person name="Weidner S."/>
            <person name="Galibert F."/>
        </authorList>
    </citation>
    <scope>NUCLEOTIDE SEQUENCE [LARGE SCALE GENOMIC DNA]</scope>
    <source>
        <strain>1021</strain>
    </source>
</reference>
<reference key="2">
    <citation type="journal article" date="2001" name="Science">
        <title>The composite genome of the legume symbiont Sinorhizobium meliloti.</title>
        <authorList>
            <person name="Galibert F."/>
            <person name="Finan T.M."/>
            <person name="Long S.R."/>
            <person name="Puehler A."/>
            <person name="Abola P."/>
            <person name="Ampe F."/>
            <person name="Barloy-Hubler F."/>
            <person name="Barnett M.J."/>
            <person name="Becker A."/>
            <person name="Boistard P."/>
            <person name="Bothe G."/>
            <person name="Boutry M."/>
            <person name="Bowser L."/>
            <person name="Buhrmester J."/>
            <person name="Cadieu E."/>
            <person name="Capela D."/>
            <person name="Chain P."/>
            <person name="Cowie A."/>
            <person name="Davis R.W."/>
            <person name="Dreano S."/>
            <person name="Federspiel N.A."/>
            <person name="Fisher R.F."/>
            <person name="Gloux S."/>
            <person name="Godrie T."/>
            <person name="Goffeau A."/>
            <person name="Golding B."/>
            <person name="Gouzy J."/>
            <person name="Gurjal M."/>
            <person name="Hernandez-Lucas I."/>
            <person name="Hong A."/>
            <person name="Huizar L."/>
            <person name="Hyman R.W."/>
            <person name="Jones T."/>
            <person name="Kahn D."/>
            <person name="Kahn M.L."/>
            <person name="Kalman S."/>
            <person name="Keating D.H."/>
            <person name="Kiss E."/>
            <person name="Komp C."/>
            <person name="Lelaure V."/>
            <person name="Masuy D."/>
            <person name="Palm C."/>
            <person name="Peck M.C."/>
            <person name="Pohl T.M."/>
            <person name="Portetelle D."/>
            <person name="Purnelle B."/>
            <person name="Ramsperger U."/>
            <person name="Surzycki R."/>
            <person name="Thebault P."/>
            <person name="Vandenbol M."/>
            <person name="Vorhoelter F.J."/>
            <person name="Weidner S."/>
            <person name="Wells D.H."/>
            <person name="Wong K."/>
            <person name="Yeh K.-C."/>
            <person name="Batut J."/>
        </authorList>
    </citation>
    <scope>NUCLEOTIDE SEQUENCE [LARGE SCALE GENOMIC DNA]</scope>
    <source>
        <strain>1021</strain>
    </source>
</reference>
<gene>
    <name evidence="1" type="primary">atpB</name>
    <name type="ordered locus">R00835</name>
    <name type="ORF">SMc00871</name>
</gene>
<proteinExistence type="inferred from homology"/>
<keyword id="KW-0066">ATP synthesis</keyword>
<keyword id="KW-0997">Cell inner membrane</keyword>
<keyword id="KW-1003">Cell membrane</keyword>
<keyword id="KW-0138">CF(0)</keyword>
<keyword id="KW-0375">Hydrogen ion transport</keyword>
<keyword id="KW-0406">Ion transport</keyword>
<keyword id="KW-0472">Membrane</keyword>
<keyword id="KW-1185">Reference proteome</keyword>
<keyword id="KW-0812">Transmembrane</keyword>
<keyword id="KW-1133">Transmembrane helix</keyword>
<keyword id="KW-0813">Transport</keyword>
<protein>
    <recommendedName>
        <fullName evidence="1">ATP synthase subunit a</fullName>
    </recommendedName>
    <alternativeName>
        <fullName evidence="1">ATP synthase F0 sector subunit a</fullName>
    </alternativeName>
    <alternativeName>
        <fullName evidence="1">F-ATPase subunit 6</fullName>
    </alternativeName>
</protein>
<organism>
    <name type="scientific">Rhizobium meliloti (strain 1021)</name>
    <name type="common">Ensifer meliloti</name>
    <name type="synonym">Sinorhizobium meliloti</name>
    <dbReference type="NCBI Taxonomy" id="266834"/>
    <lineage>
        <taxon>Bacteria</taxon>
        <taxon>Pseudomonadati</taxon>
        <taxon>Pseudomonadota</taxon>
        <taxon>Alphaproteobacteria</taxon>
        <taxon>Hyphomicrobiales</taxon>
        <taxon>Rhizobiaceae</taxon>
        <taxon>Sinorhizobium/Ensifer group</taxon>
        <taxon>Sinorhizobium</taxon>
    </lineage>
</organism>
<comment type="function">
    <text evidence="1">Key component of the proton channel; it plays a direct role in the translocation of protons across the membrane.</text>
</comment>
<comment type="subunit">
    <text evidence="1">F-type ATPases have 2 components, CF(1) - the catalytic core - and CF(0) - the membrane proton channel. CF(1) has five subunits: alpha(3), beta(3), gamma(1), delta(1), epsilon(1). CF(0) has three main subunits: a(1), b(2) and c(9-12). The alpha and beta chains form an alternating ring which encloses part of the gamma chain. CF(1) is attached to CF(0) by a central stalk formed by the gamma and epsilon chains, while a peripheral stalk is formed by the delta and b chains.</text>
</comment>
<comment type="subcellular location">
    <subcellularLocation>
        <location evidence="1">Cell inner membrane</location>
        <topology evidence="1">Multi-pass membrane protein</topology>
    </subcellularLocation>
</comment>
<comment type="similarity">
    <text evidence="1">Belongs to the ATPase A chain family.</text>
</comment>
<dbReference type="EMBL" id="AL591688">
    <property type="protein sequence ID" value="CAC45407.1"/>
    <property type="molecule type" value="Genomic_DNA"/>
</dbReference>
<dbReference type="RefSeq" id="NP_384941.1">
    <property type="nucleotide sequence ID" value="NC_003047.1"/>
</dbReference>
<dbReference type="RefSeq" id="WP_003533645.1">
    <property type="nucleotide sequence ID" value="NC_003047.1"/>
</dbReference>
<dbReference type="SMR" id="Q92RM8"/>
<dbReference type="EnsemblBacteria" id="CAC45407">
    <property type="protein sequence ID" value="CAC45407"/>
    <property type="gene ID" value="SMc00871"/>
</dbReference>
<dbReference type="KEGG" id="sme:SMc00871"/>
<dbReference type="PATRIC" id="fig|266834.11.peg.2226"/>
<dbReference type="eggNOG" id="COG0356">
    <property type="taxonomic scope" value="Bacteria"/>
</dbReference>
<dbReference type="HOGENOM" id="CLU_041018_0_2_5"/>
<dbReference type="OrthoDB" id="9809130at2"/>
<dbReference type="Proteomes" id="UP000001976">
    <property type="component" value="Chromosome"/>
</dbReference>
<dbReference type="GO" id="GO:0005886">
    <property type="term" value="C:plasma membrane"/>
    <property type="evidence" value="ECO:0007669"/>
    <property type="project" value="UniProtKB-SubCell"/>
</dbReference>
<dbReference type="GO" id="GO:0045259">
    <property type="term" value="C:proton-transporting ATP synthase complex"/>
    <property type="evidence" value="ECO:0007669"/>
    <property type="project" value="UniProtKB-KW"/>
</dbReference>
<dbReference type="GO" id="GO:0046933">
    <property type="term" value="F:proton-transporting ATP synthase activity, rotational mechanism"/>
    <property type="evidence" value="ECO:0007669"/>
    <property type="project" value="UniProtKB-UniRule"/>
</dbReference>
<dbReference type="CDD" id="cd00310">
    <property type="entry name" value="ATP-synt_Fo_a_6"/>
    <property type="match status" value="1"/>
</dbReference>
<dbReference type="FunFam" id="1.20.120.220:FF:000003">
    <property type="entry name" value="ATP synthase subunit a"/>
    <property type="match status" value="1"/>
</dbReference>
<dbReference type="Gene3D" id="1.20.120.220">
    <property type="entry name" value="ATP synthase, F0 complex, subunit A"/>
    <property type="match status" value="1"/>
</dbReference>
<dbReference type="HAMAP" id="MF_01393">
    <property type="entry name" value="ATP_synth_a_bact"/>
    <property type="match status" value="1"/>
</dbReference>
<dbReference type="InterPro" id="IPR000568">
    <property type="entry name" value="ATP_synth_F0_asu"/>
</dbReference>
<dbReference type="InterPro" id="IPR023011">
    <property type="entry name" value="ATP_synth_F0_asu_AS"/>
</dbReference>
<dbReference type="InterPro" id="IPR045083">
    <property type="entry name" value="ATP_synth_F0_asu_bact/mt"/>
</dbReference>
<dbReference type="InterPro" id="IPR035908">
    <property type="entry name" value="F0_ATP_A_sf"/>
</dbReference>
<dbReference type="NCBIfam" id="TIGR01131">
    <property type="entry name" value="ATP_synt_6_or_A"/>
    <property type="match status" value="1"/>
</dbReference>
<dbReference type="NCBIfam" id="NF004482">
    <property type="entry name" value="PRK05815.2-4"/>
    <property type="match status" value="1"/>
</dbReference>
<dbReference type="PANTHER" id="PTHR11410">
    <property type="entry name" value="ATP SYNTHASE SUBUNIT A"/>
    <property type="match status" value="1"/>
</dbReference>
<dbReference type="PANTHER" id="PTHR11410:SF0">
    <property type="entry name" value="ATP SYNTHASE SUBUNIT A"/>
    <property type="match status" value="1"/>
</dbReference>
<dbReference type="Pfam" id="PF00119">
    <property type="entry name" value="ATP-synt_A"/>
    <property type="match status" value="1"/>
</dbReference>
<dbReference type="PRINTS" id="PR00123">
    <property type="entry name" value="ATPASEA"/>
</dbReference>
<dbReference type="SUPFAM" id="SSF81336">
    <property type="entry name" value="F1F0 ATP synthase subunit A"/>
    <property type="match status" value="1"/>
</dbReference>
<dbReference type="PROSITE" id="PS00449">
    <property type="entry name" value="ATPASE_A"/>
    <property type="match status" value="1"/>
</dbReference>
<feature type="chain" id="PRO_0000362412" description="ATP synthase subunit a">
    <location>
        <begin position="1"/>
        <end position="250"/>
    </location>
</feature>
<feature type="transmembrane region" description="Helical" evidence="1">
    <location>
        <begin position="26"/>
        <end position="46"/>
    </location>
</feature>
<feature type="transmembrane region" description="Helical" evidence="1">
    <location>
        <begin position="84"/>
        <end position="104"/>
    </location>
</feature>
<feature type="transmembrane region" description="Helical" evidence="1">
    <location>
        <begin position="114"/>
        <end position="134"/>
    </location>
</feature>
<feature type="transmembrane region" description="Helical" evidence="1">
    <location>
        <begin position="143"/>
        <end position="163"/>
    </location>
</feature>
<feature type="transmembrane region" description="Helical" evidence="1">
    <location>
        <begin position="193"/>
        <end position="213"/>
    </location>
</feature>
<feature type="transmembrane region" description="Helical" evidence="1">
    <location>
        <begin position="216"/>
        <end position="236"/>
    </location>
</feature>
<name>ATP6_RHIME</name>